<name>MLC1_MACFA</name>
<accession>Q60HE7</accession>
<organism>
    <name type="scientific">Macaca fascicularis</name>
    <name type="common">Crab-eating macaque</name>
    <name type="synonym">Cynomolgus monkey</name>
    <dbReference type="NCBI Taxonomy" id="9541"/>
    <lineage>
        <taxon>Eukaryota</taxon>
        <taxon>Metazoa</taxon>
        <taxon>Chordata</taxon>
        <taxon>Craniata</taxon>
        <taxon>Vertebrata</taxon>
        <taxon>Euteleostomi</taxon>
        <taxon>Mammalia</taxon>
        <taxon>Eutheria</taxon>
        <taxon>Euarchontoglires</taxon>
        <taxon>Primates</taxon>
        <taxon>Haplorrhini</taxon>
        <taxon>Catarrhini</taxon>
        <taxon>Cercopithecidae</taxon>
        <taxon>Cercopithecinae</taxon>
        <taxon>Macaca</taxon>
    </lineage>
</organism>
<proteinExistence type="evidence at transcript level"/>
<sequence>MTQEPFREELAYDRMPTLERGRQDPASYAPDTKPSDLQLSKRLPPCFSPKTWVFSVLMGSCLLVTSGFSLYLGNVFPAEMDYLRCAAGSCIPSAIVSFTVSRRNANVIPNFQILFVSTFAVTTTCLIWFGCKLILNPSAININFNLILLLLLELLMAATVIMSARSSEEYCKKKKGSMSDGTNILGEVPFPARVLKSYSVVEVIAGISAVLGGIIALNVDDSVSGPHLSVTFFWILVACFPSAIASHVTAECPSKCLVEVLIAISSLTSPLLFTASGYLSFSVMRIVEMFKDYPPAIKPSYDVLLLLLLLVLLLQAGLNTGTAIQCVRFKVSARLQGASWDTQSGPQERLAGEVARSPLKEFDKEKAWRAVVVQMAQ</sequence>
<comment type="function">
    <text evidence="1">Transmembrane protein mainly expressed in brain astrocytes that may play a role in transport across the blood-brain and brain-cerebrospinal fluid barriers. Regulates the response of astrocytes to hypo-osmosis by promoting calcium influx. May function as regulatory protein of membrane protein complexes such as ion channels.</text>
</comment>
<comment type="subunit">
    <text evidence="1">Interacts with ATP1B1. Part of a complex containing ATP1B1, TRPV4, AQP4 and HEPACAM.</text>
</comment>
<comment type="subcellular location">
    <subcellularLocation>
        <location evidence="5">Membrane</location>
        <topology evidence="3">Multi-pass membrane protein</topology>
    </subcellularLocation>
    <subcellularLocation>
        <location evidence="1">Cell membrane</location>
        <topology evidence="3">Multi-pass membrane protein</topology>
    </subcellularLocation>
    <subcellularLocation>
        <location evidence="1">Cytoplasm</location>
        <location evidence="1">Perinuclear region</location>
    </subcellularLocation>
    <subcellularLocation>
        <location evidence="1">Endoplasmic reticulum</location>
    </subcellularLocation>
</comment>
<gene>
    <name type="primary">MLC1</name>
    <name type="ORF">QflA-15415</name>
</gene>
<dbReference type="EMBL" id="AB125180">
    <property type="protein sequence ID" value="BAD51968.1"/>
    <property type="molecule type" value="mRNA"/>
</dbReference>
<dbReference type="RefSeq" id="XP_005567013.1">
    <property type="nucleotide sequence ID" value="XM_005566956.2"/>
</dbReference>
<dbReference type="RefSeq" id="XP_015312518.1">
    <property type="nucleotide sequence ID" value="XM_015457032.1"/>
</dbReference>
<dbReference type="STRING" id="9541.ENSMFAP00000012523"/>
<dbReference type="Ensembl" id="ENSMFAT00000080566.1">
    <property type="protein sequence ID" value="ENSMFAP00000062932.1"/>
    <property type="gene ID" value="ENSMFAG00000024753.2"/>
</dbReference>
<dbReference type="GeneID" id="102146124"/>
<dbReference type="KEGG" id="mcf:102146124"/>
<dbReference type="CTD" id="23209"/>
<dbReference type="VEuPathDB" id="HostDB:ENSMFAG00000024753"/>
<dbReference type="eggNOG" id="ENOG502QUF1">
    <property type="taxonomic scope" value="Eukaryota"/>
</dbReference>
<dbReference type="GeneTree" id="ENSGT00390000015442"/>
<dbReference type="OMA" id="KAWRAVM"/>
<dbReference type="OrthoDB" id="8094at314294"/>
<dbReference type="Proteomes" id="UP000233100">
    <property type="component" value="Chromosome 10"/>
</dbReference>
<dbReference type="Bgee" id="ENSMFAG00000024753">
    <property type="expression patterns" value="Expressed in frontal cortex and 2 other cell types or tissues"/>
</dbReference>
<dbReference type="GO" id="GO:0016323">
    <property type="term" value="C:basolateral plasma membrane"/>
    <property type="evidence" value="ECO:0000250"/>
    <property type="project" value="UniProtKB"/>
</dbReference>
<dbReference type="GO" id="GO:0005901">
    <property type="term" value="C:caveola"/>
    <property type="evidence" value="ECO:0000250"/>
    <property type="project" value="UniProtKB"/>
</dbReference>
<dbReference type="GO" id="GO:0005737">
    <property type="term" value="C:cytoplasm"/>
    <property type="evidence" value="ECO:0000250"/>
    <property type="project" value="UniProtKB"/>
</dbReference>
<dbReference type="GO" id="GO:0031410">
    <property type="term" value="C:cytoplasmic vesicle"/>
    <property type="evidence" value="ECO:0000250"/>
    <property type="project" value="UniProtKB"/>
</dbReference>
<dbReference type="GO" id="GO:0005769">
    <property type="term" value="C:early endosome"/>
    <property type="evidence" value="ECO:0000250"/>
    <property type="project" value="UniProtKB"/>
</dbReference>
<dbReference type="GO" id="GO:0005783">
    <property type="term" value="C:endoplasmic reticulum"/>
    <property type="evidence" value="ECO:0000250"/>
    <property type="project" value="UniProtKB"/>
</dbReference>
<dbReference type="GO" id="GO:0005768">
    <property type="term" value="C:endosome"/>
    <property type="evidence" value="ECO:0000250"/>
    <property type="project" value="UniProtKB"/>
</dbReference>
<dbReference type="GO" id="GO:0005764">
    <property type="term" value="C:lysosome"/>
    <property type="evidence" value="ECO:0000250"/>
    <property type="project" value="UniProtKB"/>
</dbReference>
<dbReference type="GO" id="GO:0016020">
    <property type="term" value="C:membrane"/>
    <property type="evidence" value="ECO:0000250"/>
    <property type="project" value="UniProtKB"/>
</dbReference>
<dbReference type="GO" id="GO:0045121">
    <property type="term" value="C:membrane raft"/>
    <property type="evidence" value="ECO:0000250"/>
    <property type="project" value="UniProtKB"/>
</dbReference>
<dbReference type="GO" id="GO:0048471">
    <property type="term" value="C:perinuclear region of cytoplasm"/>
    <property type="evidence" value="ECO:0000250"/>
    <property type="project" value="UniProtKB"/>
</dbReference>
<dbReference type="GO" id="GO:0005886">
    <property type="term" value="C:plasma membrane"/>
    <property type="evidence" value="ECO:0000250"/>
    <property type="project" value="UniProtKB"/>
</dbReference>
<dbReference type="GO" id="GO:0055037">
    <property type="term" value="C:recycling endosome"/>
    <property type="evidence" value="ECO:0000250"/>
    <property type="project" value="UniProtKB"/>
</dbReference>
<dbReference type="GO" id="GO:0042802">
    <property type="term" value="F:identical protein binding"/>
    <property type="evidence" value="ECO:0000250"/>
    <property type="project" value="UniProtKB"/>
</dbReference>
<dbReference type="GO" id="GO:0044877">
    <property type="term" value="F:protein-containing complex binding"/>
    <property type="evidence" value="ECO:0000250"/>
    <property type="project" value="UniProtKB"/>
</dbReference>
<dbReference type="GO" id="GO:0072584">
    <property type="term" value="P:caveolin-mediated endocytosis"/>
    <property type="evidence" value="ECO:0000250"/>
    <property type="project" value="UniProtKB"/>
</dbReference>
<dbReference type="GO" id="GO:0071397">
    <property type="term" value="P:cellular response to cholesterol"/>
    <property type="evidence" value="ECO:0000250"/>
    <property type="project" value="UniProtKB"/>
</dbReference>
<dbReference type="GO" id="GO:0032388">
    <property type="term" value="P:positive regulation of intracellular transport"/>
    <property type="evidence" value="ECO:0000250"/>
    <property type="project" value="UniProtKB"/>
</dbReference>
<dbReference type="GO" id="GO:0047484">
    <property type="term" value="P:regulation of response to osmotic stress"/>
    <property type="evidence" value="ECO:0007669"/>
    <property type="project" value="TreeGrafter"/>
</dbReference>
<dbReference type="GO" id="GO:0016192">
    <property type="term" value="P:vesicle-mediated transport"/>
    <property type="evidence" value="ECO:0000250"/>
    <property type="project" value="UniProtKB"/>
</dbReference>
<dbReference type="InterPro" id="IPR033280">
    <property type="entry name" value="Membrane_MLC1"/>
</dbReference>
<dbReference type="PANTHER" id="PTHR17597">
    <property type="entry name" value="MEMBRANE PROTEIN MLC1"/>
    <property type="match status" value="1"/>
</dbReference>
<dbReference type="PANTHER" id="PTHR17597:SF0">
    <property type="entry name" value="MEMBRANE PROTEIN MLC1"/>
    <property type="match status" value="1"/>
</dbReference>
<keyword id="KW-1003">Cell membrane</keyword>
<keyword id="KW-0963">Cytoplasm</keyword>
<keyword id="KW-0256">Endoplasmic reticulum</keyword>
<keyword id="KW-0472">Membrane</keyword>
<keyword id="KW-0597">Phosphoprotein</keyword>
<keyword id="KW-1185">Reference proteome</keyword>
<keyword id="KW-0812">Transmembrane</keyword>
<keyword id="KW-1133">Transmembrane helix</keyword>
<evidence type="ECO:0000250" key="1">
    <source>
        <dbReference type="UniProtKB" id="Q15049"/>
    </source>
</evidence>
<evidence type="ECO:0000250" key="2">
    <source>
        <dbReference type="UniProtKB" id="Q8VHK5"/>
    </source>
</evidence>
<evidence type="ECO:0000255" key="3"/>
<evidence type="ECO:0000256" key="4">
    <source>
        <dbReference type="SAM" id="MobiDB-lite"/>
    </source>
</evidence>
<evidence type="ECO:0000305" key="5"/>
<reference key="1">
    <citation type="submission" date="2003-10" db="EMBL/GenBank/DDBJ databases">
        <title>Isolation and characterization of cDNA for macaque neurological disease genes.</title>
        <authorList>
            <person name="Kusuda J."/>
            <person name="Osada N."/>
            <person name="Tanuma R."/>
            <person name="Hirata M."/>
            <person name="Sugano S."/>
            <person name="Hashimoto K."/>
        </authorList>
    </citation>
    <scope>NUCLEOTIDE SEQUENCE [LARGE SCALE MRNA]</scope>
    <source>
        <tissue>Frontal cortex</tissue>
    </source>
</reference>
<protein>
    <recommendedName>
        <fullName>Membrane protein MLC1</fullName>
    </recommendedName>
</protein>
<feature type="chain" id="PRO_0000096497" description="Membrane protein MLC1">
    <location>
        <begin position="1"/>
        <end position="377"/>
    </location>
</feature>
<feature type="transmembrane region" description="Helical" evidence="3">
    <location>
        <begin position="52"/>
        <end position="72"/>
    </location>
</feature>
<feature type="transmembrane region" description="Helical" evidence="3">
    <location>
        <begin position="82"/>
        <end position="100"/>
    </location>
</feature>
<feature type="transmembrane region" description="Helical" evidence="3">
    <location>
        <begin position="111"/>
        <end position="131"/>
    </location>
</feature>
<feature type="transmembrane region" description="Helical" evidence="3">
    <location>
        <begin position="142"/>
        <end position="162"/>
    </location>
</feature>
<feature type="transmembrane region" description="Helical" evidence="3">
    <location>
        <begin position="199"/>
        <end position="219"/>
    </location>
</feature>
<feature type="transmembrane region" description="Helical" evidence="3">
    <location>
        <begin position="228"/>
        <end position="248"/>
    </location>
</feature>
<feature type="transmembrane region" description="Helical" evidence="3">
    <location>
        <begin position="257"/>
        <end position="277"/>
    </location>
</feature>
<feature type="transmembrane region" description="Helical" evidence="3">
    <location>
        <begin position="304"/>
        <end position="324"/>
    </location>
</feature>
<feature type="region of interest" description="Disordered" evidence="4">
    <location>
        <begin position="1"/>
        <end position="37"/>
    </location>
</feature>
<feature type="compositionally biased region" description="Basic and acidic residues" evidence="4">
    <location>
        <begin position="1"/>
        <end position="23"/>
    </location>
</feature>
<feature type="modified residue" description="Phosphoserine" evidence="2">
    <location>
        <position position="177"/>
    </location>
</feature>
<feature type="modified residue" description="Phosphoserine" evidence="2">
    <location>
        <position position="179"/>
    </location>
</feature>